<accession>B2K970</accession>
<organism>
    <name type="scientific">Yersinia pseudotuberculosis serotype IB (strain PB1/+)</name>
    <dbReference type="NCBI Taxonomy" id="502801"/>
    <lineage>
        <taxon>Bacteria</taxon>
        <taxon>Pseudomonadati</taxon>
        <taxon>Pseudomonadota</taxon>
        <taxon>Gammaproteobacteria</taxon>
        <taxon>Enterobacterales</taxon>
        <taxon>Yersiniaceae</taxon>
        <taxon>Yersinia</taxon>
    </lineage>
</organism>
<evidence type="ECO:0000255" key="1">
    <source>
        <dbReference type="HAMAP-Rule" id="MF_01630"/>
    </source>
</evidence>
<name>NAPA_YERPB</name>
<sequence>MKLSRRDFMKANAAVAAAAAAGMTIPTVAKAVGETTNAIKWDKAPCRFCGTGCGVLVGTQNGRIVASQGDPDSPVNRGLNCIKGYFLPKIMYGKDRLTQPLLRMKDGQYDKEGDFTPISWEKAFDIMELKFKNALKEKGPTAVGMFGSGQWTVWEGYAALKLLKGGFRSNNLDPNARHCMASSVVGFMRTFGMDEPMGCYDDIEEADAFVLWGSNMAEMHPVLWSRMTSRRLTNAHVRIAVLSTYEHRSFELADNPIVFTPQTDLVIMNYIANYIIQNNAVDKDFLAQHVNFRRGATDIGYGLRPTHPLEKAAKNPGSDASEPMSFEDFKTFVAEYTLEKTAKMSGVPEDQLESLAQLYADPKVKLVSYWTMGFNQHTRGVWANNMCYNLHLLTGKISTPGSGPFSLTGQPSACGTAREVGTFSHRLPADMVVTNEKHRQIAETTWQLPAGTIPEKVGLHAVAQDRALKDGTLNAYWVMCNNNMQAGPNINEERMPGWRDPRNFIVVSDPYPTISALSADLILPTSMWVEKEGAYGNAERRTQFWRQQVPSPGEAKSDLWQIVEFAKRFNVEEVWPAELVNQKPEYRGKNLYEVLFANDVVSKYPLSEIPDDQLNDEARDFGFYIQKGLFEEYASFGRGHAHDLAPFDVYHQVRGLRWPVVDGKETLWRYREGFDPFVPKGEEVRFYGKPDGKAVIFALPYEPAAESPDQEYDLWLSTGRVLEHWHTGSMTRRVPELHRAFPEAVLFIHPLDAKARGLHRGDKVKVISRRGEVISLVETRGRNRPPRGLVYMPFFDAAQLVNNLTLDATDPLSKETDFKKCAVKLERVVA</sequence>
<gene>
    <name evidence="1" type="primary">napA</name>
    <name type="ordered locus">YPTS_2864</name>
</gene>
<keyword id="KW-0004">4Fe-4S</keyword>
<keyword id="KW-0249">Electron transport</keyword>
<keyword id="KW-0408">Iron</keyword>
<keyword id="KW-0411">Iron-sulfur</keyword>
<keyword id="KW-0479">Metal-binding</keyword>
<keyword id="KW-0500">Molybdenum</keyword>
<keyword id="KW-0534">Nitrate assimilation</keyword>
<keyword id="KW-0560">Oxidoreductase</keyword>
<keyword id="KW-0574">Periplasm</keyword>
<keyword id="KW-0732">Signal</keyword>
<keyword id="KW-0813">Transport</keyword>
<comment type="function">
    <text evidence="1">Catalytic subunit of the periplasmic nitrate reductase complex NapAB. Receives electrons from NapB and catalyzes the reduction of nitrate to nitrite.</text>
</comment>
<comment type="catalytic activity">
    <reaction evidence="1">
        <text>2 Fe(II)-[cytochrome] + nitrate + 2 H(+) = 2 Fe(III)-[cytochrome] + nitrite + H2O</text>
        <dbReference type="Rhea" id="RHEA:12909"/>
        <dbReference type="Rhea" id="RHEA-COMP:11777"/>
        <dbReference type="Rhea" id="RHEA-COMP:11778"/>
        <dbReference type="ChEBI" id="CHEBI:15377"/>
        <dbReference type="ChEBI" id="CHEBI:15378"/>
        <dbReference type="ChEBI" id="CHEBI:16301"/>
        <dbReference type="ChEBI" id="CHEBI:17632"/>
        <dbReference type="ChEBI" id="CHEBI:29033"/>
        <dbReference type="ChEBI" id="CHEBI:29034"/>
        <dbReference type="EC" id="1.9.6.1"/>
    </reaction>
</comment>
<comment type="cofactor">
    <cofactor evidence="1">
        <name>[4Fe-4S] cluster</name>
        <dbReference type="ChEBI" id="CHEBI:49883"/>
    </cofactor>
    <text evidence="1">Binds 1 [4Fe-4S] cluster.</text>
</comment>
<comment type="cofactor">
    <cofactor evidence="1">
        <name>Mo-bis(molybdopterin guanine dinucleotide)</name>
        <dbReference type="ChEBI" id="CHEBI:60539"/>
    </cofactor>
    <text evidence="1">Binds 1 molybdenum-bis(molybdopterin guanine dinucleotide) (Mo-bis-MGD) cofactor per subunit.</text>
</comment>
<comment type="subunit">
    <text evidence="1">Component of the periplasmic nitrate reductase NapAB complex composed of NapA and NapB.</text>
</comment>
<comment type="subcellular location">
    <subcellularLocation>
        <location evidence="1">Periplasm</location>
    </subcellularLocation>
</comment>
<comment type="PTM">
    <text evidence="1">Predicted to be exported by the Tat system. The position of the signal peptide cleavage has not been experimentally proven.</text>
</comment>
<comment type="similarity">
    <text evidence="1">Belongs to the prokaryotic molybdopterin-containing oxidoreductase family. NasA/NapA/NarB subfamily.</text>
</comment>
<dbReference type="EC" id="1.9.6.1" evidence="1"/>
<dbReference type="EMBL" id="CP001048">
    <property type="protein sequence ID" value="ACC89821.1"/>
    <property type="molecule type" value="Genomic_DNA"/>
</dbReference>
<dbReference type="RefSeq" id="WP_011171900.1">
    <property type="nucleotide sequence ID" value="NZ_CP009780.1"/>
</dbReference>
<dbReference type="SMR" id="B2K970"/>
<dbReference type="GeneID" id="49785228"/>
<dbReference type="KEGG" id="ypb:YPTS_2864"/>
<dbReference type="PATRIC" id="fig|502801.10.peg.2292"/>
<dbReference type="GO" id="GO:0016020">
    <property type="term" value="C:membrane"/>
    <property type="evidence" value="ECO:0007669"/>
    <property type="project" value="TreeGrafter"/>
</dbReference>
<dbReference type="GO" id="GO:0009325">
    <property type="term" value="C:nitrate reductase complex"/>
    <property type="evidence" value="ECO:0007669"/>
    <property type="project" value="TreeGrafter"/>
</dbReference>
<dbReference type="GO" id="GO:0042597">
    <property type="term" value="C:periplasmic space"/>
    <property type="evidence" value="ECO:0007669"/>
    <property type="project" value="UniProtKB-SubCell"/>
</dbReference>
<dbReference type="GO" id="GO:0051539">
    <property type="term" value="F:4 iron, 4 sulfur cluster binding"/>
    <property type="evidence" value="ECO:0007669"/>
    <property type="project" value="UniProtKB-KW"/>
</dbReference>
<dbReference type="GO" id="GO:0009055">
    <property type="term" value="F:electron transfer activity"/>
    <property type="evidence" value="ECO:0007669"/>
    <property type="project" value="UniProtKB-UniRule"/>
</dbReference>
<dbReference type="GO" id="GO:0005506">
    <property type="term" value="F:iron ion binding"/>
    <property type="evidence" value="ECO:0007669"/>
    <property type="project" value="UniProtKB-UniRule"/>
</dbReference>
<dbReference type="GO" id="GO:0030151">
    <property type="term" value="F:molybdenum ion binding"/>
    <property type="evidence" value="ECO:0007669"/>
    <property type="project" value="InterPro"/>
</dbReference>
<dbReference type="GO" id="GO:0043546">
    <property type="term" value="F:molybdopterin cofactor binding"/>
    <property type="evidence" value="ECO:0007669"/>
    <property type="project" value="InterPro"/>
</dbReference>
<dbReference type="GO" id="GO:0050140">
    <property type="term" value="F:nitrate reductase (cytochrome) activity"/>
    <property type="evidence" value="ECO:0007669"/>
    <property type="project" value="UniProtKB-EC"/>
</dbReference>
<dbReference type="GO" id="GO:0045333">
    <property type="term" value="P:cellular respiration"/>
    <property type="evidence" value="ECO:0007669"/>
    <property type="project" value="UniProtKB-ARBA"/>
</dbReference>
<dbReference type="GO" id="GO:0006777">
    <property type="term" value="P:Mo-molybdopterin cofactor biosynthetic process"/>
    <property type="evidence" value="ECO:0007669"/>
    <property type="project" value="UniProtKB-UniRule"/>
</dbReference>
<dbReference type="GO" id="GO:0042128">
    <property type="term" value="P:nitrate assimilation"/>
    <property type="evidence" value="ECO:0007669"/>
    <property type="project" value="UniProtKB-UniRule"/>
</dbReference>
<dbReference type="CDD" id="cd02791">
    <property type="entry name" value="MopB_CT_Nitrate-R-NapA-like"/>
    <property type="match status" value="1"/>
</dbReference>
<dbReference type="CDD" id="cd02754">
    <property type="entry name" value="MopB_Nitrate-R-NapA-like"/>
    <property type="match status" value="1"/>
</dbReference>
<dbReference type="FunFam" id="2.40.40.20:FF:000005">
    <property type="entry name" value="Periplasmic nitrate reductase"/>
    <property type="match status" value="1"/>
</dbReference>
<dbReference type="Gene3D" id="2.40.40.20">
    <property type="match status" value="1"/>
</dbReference>
<dbReference type="Gene3D" id="3.30.200.210">
    <property type="match status" value="1"/>
</dbReference>
<dbReference type="Gene3D" id="3.40.50.740">
    <property type="match status" value="1"/>
</dbReference>
<dbReference type="Gene3D" id="3.40.228.10">
    <property type="entry name" value="Dimethylsulfoxide Reductase, domain 2"/>
    <property type="match status" value="1"/>
</dbReference>
<dbReference type="HAMAP" id="MF_01630">
    <property type="entry name" value="Nitrate_reduct_NapA"/>
    <property type="match status" value="1"/>
</dbReference>
<dbReference type="InterPro" id="IPR009010">
    <property type="entry name" value="Asp_de-COase-like_dom_sf"/>
</dbReference>
<dbReference type="InterPro" id="IPR041957">
    <property type="entry name" value="CT_Nitrate-R-NapA-like"/>
</dbReference>
<dbReference type="InterPro" id="IPR006657">
    <property type="entry name" value="MoPterin_dinucl-bd_dom"/>
</dbReference>
<dbReference type="InterPro" id="IPR006656">
    <property type="entry name" value="Mopterin_OxRdtase"/>
</dbReference>
<dbReference type="InterPro" id="IPR006963">
    <property type="entry name" value="Mopterin_OxRdtase_4Fe-4S_dom"/>
</dbReference>
<dbReference type="InterPro" id="IPR027467">
    <property type="entry name" value="MopterinOxRdtase_cofactor_BS"/>
</dbReference>
<dbReference type="InterPro" id="IPR010051">
    <property type="entry name" value="Periplasm_NO3_reductase_lsu"/>
</dbReference>
<dbReference type="InterPro" id="IPR050123">
    <property type="entry name" value="Prok_molybdopt-oxidoreductase"/>
</dbReference>
<dbReference type="InterPro" id="IPR006311">
    <property type="entry name" value="TAT_signal"/>
</dbReference>
<dbReference type="InterPro" id="IPR019546">
    <property type="entry name" value="TAT_signal_bac_arc"/>
</dbReference>
<dbReference type="NCBIfam" id="TIGR01706">
    <property type="entry name" value="NAPA"/>
    <property type="match status" value="1"/>
</dbReference>
<dbReference type="NCBIfam" id="NF010055">
    <property type="entry name" value="PRK13532.1"/>
    <property type="match status" value="1"/>
</dbReference>
<dbReference type="NCBIfam" id="TIGR01409">
    <property type="entry name" value="TAT_signal_seq"/>
    <property type="match status" value="1"/>
</dbReference>
<dbReference type="PANTHER" id="PTHR43105:SF11">
    <property type="entry name" value="PERIPLASMIC NITRATE REDUCTASE"/>
    <property type="match status" value="1"/>
</dbReference>
<dbReference type="PANTHER" id="PTHR43105">
    <property type="entry name" value="RESPIRATORY NITRATE REDUCTASE"/>
    <property type="match status" value="1"/>
</dbReference>
<dbReference type="Pfam" id="PF04879">
    <property type="entry name" value="Molybdop_Fe4S4"/>
    <property type="match status" value="1"/>
</dbReference>
<dbReference type="Pfam" id="PF00384">
    <property type="entry name" value="Molybdopterin"/>
    <property type="match status" value="1"/>
</dbReference>
<dbReference type="Pfam" id="PF01568">
    <property type="entry name" value="Molydop_binding"/>
    <property type="match status" value="1"/>
</dbReference>
<dbReference type="Pfam" id="PF10518">
    <property type="entry name" value="TAT_signal"/>
    <property type="match status" value="1"/>
</dbReference>
<dbReference type="SMART" id="SM00926">
    <property type="entry name" value="Molybdop_Fe4S4"/>
    <property type="match status" value="1"/>
</dbReference>
<dbReference type="SUPFAM" id="SSF50692">
    <property type="entry name" value="ADC-like"/>
    <property type="match status" value="1"/>
</dbReference>
<dbReference type="SUPFAM" id="SSF53706">
    <property type="entry name" value="Formate dehydrogenase/DMSO reductase, domains 1-3"/>
    <property type="match status" value="1"/>
</dbReference>
<dbReference type="PROSITE" id="PS51669">
    <property type="entry name" value="4FE4S_MOW_BIS_MGD"/>
    <property type="match status" value="1"/>
</dbReference>
<dbReference type="PROSITE" id="PS00551">
    <property type="entry name" value="MOLYBDOPTERIN_PROK_1"/>
    <property type="match status" value="1"/>
</dbReference>
<dbReference type="PROSITE" id="PS51318">
    <property type="entry name" value="TAT"/>
    <property type="match status" value="1"/>
</dbReference>
<reference key="1">
    <citation type="submission" date="2008-04" db="EMBL/GenBank/DDBJ databases">
        <title>Complete sequence of Yersinia pseudotuberculosis PB1/+.</title>
        <authorList>
            <person name="Copeland A."/>
            <person name="Lucas S."/>
            <person name="Lapidus A."/>
            <person name="Glavina del Rio T."/>
            <person name="Dalin E."/>
            <person name="Tice H."/>
            <person name="Bruce D."/>
            <person name="Goodwin L."/>
            <person name="Pitluck S."/>
            <person name="Munk A.C."/>
            <person name="Brettin T."/>
            <person name="Detter J.C."/>
            <person name="Han C."/>
            <person name="Tapia R."/>
            <person name="Schmutz J."/>
            <person name="Larimer F."/>
            <person name="Land M."/>
            <person name="Hauser L."/>
            <person name="Challacombe J.F."/>
            <person name="Green L."/>
            <person name="Lindler L.E."/>
            <person name="Nikolich M.P."/>
            <person name="Richardson P."/>
        </authorList>
    </citation>
    <scope>NUCLEOTIDE SEQUENCE [LARGE SCALE GENOMIC DNA]</scope>
    <source>
        <strain>PB1/+</strain>
    </source>
</reference>
<feature type="signal peptide" description="Tat-type signal" evidence="1">
    <location>
        <begin position="1"/>
        <end position="31"/>
    </location>
</feature>
<feature type="chain" id="PRO_5000345925" description="Periplasmic nitrate reductase" evidence="1">
    <location>
        <begin position="32"/>
        <end position="830"/>
    </location>
</feature>
<feature type="domain" description="4Fe-4S Mo/W bis-MGD-type" evidence="1">
    <location>
        <begin position="39"/>
        <end position="95"/>
    </location>
</feature>
<feature type="binding site" evidence="1">
    <location>
        <position position="46"/>
    </location>
    <ligand>
        <name>[4Fe-4S] cluster</name>
        <dbReference type="ChEBI" id="CHEBI:49883"/>
    </ligand>
</feature>
<feature type="binding site" evidence="1">
    <location>
        <position position="49"/>
    </location>
    <ligand>
        <name>[4Fe-4S] cluster</name>
        <dbReference type="ChEBI" id="CHEBI:49883"/>
    </ligand>
</feature>
<feature type="binding site" evidence="1">
    <location>
        <position position="53"/>
    </location>
    <ligand>
        <name>[4Fe-4S] cluster</name>
        <dbReference type="ChEBI" id="CHEBI:49883"/>
    </ligand>
</feature>
<feature type="binding site" evidence="1">
    <location>
        <position position="81"/>
    </location>
    <ligand>
        <name>[4Fe-4S] cluster</name>
        <dbReference type="ChEBI" id="CHEBI:49883"/>
    </ligand>
</feature>
<feature type="binding site" evidence="1">
    <location>
        <position position="83"/>
    </location>
    <ligand>
        <name>Mo-bis(molybdopterin guanine dinucleotide)</name>
        <dbReference type="ChEBI" id="CHEBI:60539"/>
    </ligand>
</feature>
<feature type="binding site" evidence="1">
    <location>
        <position position="150"/>
    </location>
    <ligand>
        <name>Mo-bis(molybdopterin guanine dinucleotide)</name>
        <dbReference type="ChEBI" id="CHEBI:60539"/>
    </ligand>
</feature>
<feature type="binding site" evidence="1">
    <location>
        <position position="175"/>
    </location>
    <ligand>
        <name>Mo-bis(molybdopterin guanine dinucleotide)</name>
        <dbReference type="ChEBI" id="CHEBI:60539"/>
    </ligand>
</feature>
<feature type="binding site" evidence="1">
    <location>
        <position position="179"/>
    </location>
    <ligand>
        <name>Mo-bis(molybdopterin guanine dinucleotide)</name>
        <dbReference type="ChEBI" id="CHEBI:60539"/>
    </ligand>
</feature>
<feature type="binding site" evidence="1">
    <location>
        <begin position="212"/>
        <end position="219"/>
    </location>
    <ligand>
        <name>Mo-bis(molybdopterin guanine dinucleotide)</name>
        <dbReference type="ChEBI" id="CHEBI:60539"/>
    </ligand>
</feature>
<feature type="binding site" evidence="1">
    <location>
        <begin position="243"/>
        <end position="247"/>
    </location>
    <ligand>
        <name>Mo-bis(molybdopterin guanine dinucleotide)</name>
        <dbReference type="ChEBI" id="CHEBI:60539"/>
    </ligand>
</feature>
<feature type="binding site" evidence="1">
    <location>
        <begin position="262"/>
        <end position="264"/>
    </location>
    <ligand>
        <name>Mo-bis(molybdopterin guanine dinucleotide)</name>
        <dbReference type="ChEBI" id="CHEBI:60539"/>
    </ligand>
</feature>
<feature type="binding site" evidence="1">
    <location>
        <position position="372"/>
    </location>
    <ligand>
        <name>Mo-bis(molybdopterin guanine dinucleotide)</name>
        <dbReference type="ChEBI" id="CHEBI:60539"/>
    </ligand>
</feature>
<feature type="binding site" evidence="1">
    <location>
        <position position="376"/>
    </location>
    <ligand>
        <name>Mo-bis(molybdopterin guanine dinucleotide)</name>
        <dbReference type="ChEBI" id="CHEBI:60539"/>
    </ligand>
</feature>
<feature type="binding site" evidence="1">
    <location>
        <position position="482"/>
    </location>
    <ligand>
        <name>Mo-bis(molybdopterin guanine dinucleotide)</name>
        <dbReference type="ChEBI" id="CHEBI:60539"/>
    </ligand>
</feature>
<feature type="binding site" evidence="1">
    <location>
        <begin position="508"/>
        <end position="509"/>
    </location>
    <ligand>
        <name>Mo-bis(molybdopterin guanine dinucleotide)</name>
        <dbReference type="ChEBI" id="CHEBI:60539"/>
    </ligand>
</feature>
<feature type="binding site" evidence="1">
    <location>
        <position position="531"/>
    </location>
    <ligand>
        <name>Mo-bis(molybdopterin guanine dinucleotide)</name>
        <dbReference type="ChEBI" id="CHEBI:60539"/>
    </ligand>
</feature>
<feature type="binding site" evidence="1">
    <location>
        <position position="558"/>
    </location>
    <ligand>
        <name>Mo-bis(molybdopterin guanine dinucleotide)</name>
        <dbReference type="ChEBI" id="CHEBI:60539"/>
    </ligand>
</feature>
<feature type="binding site" evidence="1">
    <location>
        <begin position="718"/>
        <end position="727"/>
    </location>
    <ligand>
        <name>Mo-bis(molybdopterin guanine dinucleotide)</name>
        <dbReference type="ChEBI" id="CHEBI:60539"/>
    </ligand>
</feature>
<feature type="binding site" evidence="1">
    <location>
        <position position="794"/>
    </location>
    <ligand>
        <name>substrate</name>
    </ligand>
</feature>
<feature type="binding site" evidence="1">
    <location>
        <position position="802"/>
    </location>
    <ligand>
        <name>Mo-bis(molybdopterin guanine dinucleotide)</name>
        <dbReference type="ChEBI" id="CHEBI:60539"/>
    </ligand>
</feature>
<feature type="binding site" evidence="1">
    <location>
        <position position="819"/>
    </location>
    <ligand>
        <name>Mo-bis(molybdopterin guanine dinucleotide)</name>
        <dbReference type="ChEBI" id="CHEBI:60539"/>
    </ligand>
</feature>
<proteinExistence type="inferred from homology"/>
<protein>
    <recommendedName>
        <fullName evidence="1">Periplasmic nitrate reductase</fullName>
        <ecNumber evidence="1">1.9.6.1</ecNumber>
    </recommendedName>
</protein>